<protein>
    <recommendedName>
        <fullName evidence="1">DNA mismatch repair protein MutS</fullName>
    </recommendedName>
</protein>
<proteinExistence type="inferred from homology"/>
<comment type="function">
    <text evidence="1">This protein is involved in the repair of mismatches in DNA. It is possible that it carries out the mismatch recognition step. This protein has a weak ATPase activity.</text>
</comment>
<comment type="similarity">
    <text evidence="1">Belongs to the DNA mismatch repair MutS family.</text>
</comment>
<evidence type="ECO:0000255" key="1">
    <source>
        <dbReference type="HAMAP-Rule" id="MF_00096"/>
    </source>
</evidence>
<organism>
    <name type="scientific">Streptococcus equi subsp. equi (strain 4047)</name>
    <dbReference type="NCBI Taxonomy" id="553482"/>
    <lineage>
        <taxon>Bacteria</taxon>
        <taxon>Bacillati</taxon>
        <taxon>Bacillota</taxon>
        <taxon>Bacilli</taxon>
        <taxon>Lactobacillales</taxon>
        <taxon>Streptococcaceae</taxon>
        <taxon>Streptococcus</taxon>
    </lineage>
</organism>
<feature type="chain" id="PRO_1000192203" description="DNA mismatch repair protein MutS">
    <location>
        <begin position="1"/>
        <end position="851"/>
    </location>
</feature>
<feature type="binding site" evidence="1">
    <location>
        <begin position="602"/>
        <end position="609"/>
    </location>
    <ligand>
        <name>ATP</name>
        <dbReference type="ChEBI" id="CHEBI:30616"/>
    </ligand>
</feature>
<accession>C0MAS5</accession>
<name>MUTS_STRE4</name>
<reference key="1">
    <citation type="journal article" date="2009" name="PLoS Pathog.">
        <title>Genomic evidence for the evolution of Streptococcus equi: host restriction, increased virulence, and genetic exchange with human pathogens.</title>
        <authorList>
            <person name="Holden M.T.G."/>
            <person name="Heather Z."/>
            <person name="Paillot R."/>
            <person name="Steward K.F."/>
            <person name="Webb K."/>
            <person name="Ainslie F."/>
            <person name="Jourdan T."/>
            <person name="Bason N.C."/>
            <person name="Holroyd N.E."/>
            <person name="Mungall K."/>
            <person name="Quail M.A."/>
            <person name="Sanders M."/>
            <person name="Simmonds M."/>
            <person name="Willey D."/>
            <person name="Brooks K."/>
            <person name="Aanensen D.M."/>
            <person name="Spratt B.G."/>
            <person name="Jolley K.A."/>
            <person name="Maiden M.C.J."/>
            <person name="Kehoe M."/>
            <person name="Chanter N."/>
            <person name="Bentley S.D."/>
            <person name="Robinson C."/>
            <person name="Maskell D.J."/>
            <person name="Parkhill J."/>
            <person name="Waller A.S."/>
        </authorList>
    </citation>
    <scope>NUCLEOTIDE SEQUENCE [LARGE SCALE GENOMIC DNA]</scope>
    <source>
        <strain>4047</strain>
    </source>
</reference>
<gene>
    <name evidence="1" type="primary">mutS</name>
    <name type="ordered locus">SEQ_2161</name>
</gene>
<dbReference type="EMBL" id="FM204883">
    <property type="protein sequence ID" value="CAW95529.1"/>
    <property type="molecule type" value="Genomic_DNA"/>
</dbReference>
<dbReference type="RefSeq" id="WP_015898667.1">
    <property type="nucleotide sequence ID" value="NC_012471.1"/>
</dbReference>
<dbReference type="SMR" id="C0MAS5"/>
<dbReference type="KEGG" id="seu:SEQ_2161"/>
<dbReference type="HOGENOM" id="CLU_002472_3_1_9"/>
<dbReference type="OrthoDB" id="9802448at2"/>
<dbReference type="Proteomes" id="UP000001365">
    <property type="component" value="Chromosome"/>
</dbReference>
<dbReference type="GO" id="GO:0005829">
    <property type="term" value="C:cytosol"/>
    <property type="evidence" value="ECO:0007669"/>
    <property type="project" value="TreeGrafter"/>
</dbReference>
<dbReference type="GO" id="GO:0005524">
    <property type="term" value="F:ATP binding"/>
    <property type="evidence" value="ECO:0007669"/>
    <property type="project" value="UniProtKB-UniRule"/>
</dbReference>
<dbReference type="GO" id="GO:0140664">
    <property type="term" value="F:ATP-dependent DNA damage sensor activity"/>
    <property type="evidence" value="ECO:0007669"/>
    <property type="project" value="InterPro"/>
</dbReference>
<dbReference type="GO" id="GO:0003684">
    <property type="term" value="F:damaged DNA binding"/>
    <property type="evidence" value="ECO:0007669"/>
    <property type="project" value="UniProtKB-UniRule"/>
</dbReference>
<dbReference type="GO" id="GO:0030983">
    <property type="term" value="F:mismatched DNA binding"/>
    <property type="evidence" value="ECO:0007669"/>
    <property type="project" value="InterPro"/>
</dbReference>
<dbReference type="GO" id="GO:0006298">
    <property type="term" value="P:mismatch repair"/>
    <property type="evidence" value="ECO:0007669"/>
    <property type="project" value="UniProtKB-UniRule"/>
</dbReference>
<dbReference type="CDD" id="cd03284">
    <property type="entry name" value="ABC_MutS1"/>
    <property type="match status" value="1"/>
</dbReference>
<dbReference type="FunFam" id="1.10.1420.10:FF:000001">
    <property type="entry name" value="DNA mismatch repair protein MutS"/>
    <property type="match status" value="1"/>
</dbReference>
<dbReference type="FunFam" id="3.40.1170.10:FF:000001">
    <property type="entry name" value="DNA mismatch repair protein MutS"/>
    <property type="match status" value="1"/>
</dbReference>
<dbReference type="FunFam" id="3.40.50.300:FF:000896">
    <property type="entry name" value="DNA mismatch repair protein MutS"/>
    <property type="match status" value="1"/>
</dbReference>
<dbReference type="Gene3D" id="1.10.1420.10">
    <property type="match status" value="2"/>
</dbReference>
<dbReference type="Gene3D" id="3.40.1170.10">
    <property type="entry name" value="DNA repair protein MutS, domain I"/>
    <property type="match status" value="1"/>
</dbReference>
<dbReference type="Gene3D" id="3.30.420.110">
    <property type="entry name" value="MutS, connector domain"/>
    <property type="match status" value="1"/>
</dbReference>
<dbReference type="Gene3D" id="3.40.50.300">
    <property type="entry name" value="P-loop containing nucleotide triphosphate hydrolases"/>
    <property type="match status" value="1"/>
</dbReference>
<dbReference type="HAMAP" id="MF_00096">
    <property type="entry name" value="MutS"/>
    <property type="match status" value="1"/>
</dbReference>
<dbReference type="InterPro" id="IPR005748">
    <property type="entry name" value="DNA_mismatch_repair_MutS"/>
</dbReference>
<dbReference type="InterPro" id="IPR007695">
    <property type="entry name" value="DNA_mismatch_repair_MutS-lik_N"/>
</dbReference>
<dbReference type="InterPro" id="IPR017261">
    <property type="entry name" value="DNA_mismatch_repair_MutS/MSH"/>
</dbReference>
<dbReference type="InterPro" id="IPR000432">
    <property type="entry name" value="DNA_mismatch_repair_MutS_C"/>
</dbReference>
<dbReference type="InterPro" id="IPR007861">
    <property type="entry name" value="DNA_mismatch_repair_MutS_clamp"/>
</dbReference>
<dbReference type="InterPro" id="IPR007696">
    <property type="entry name" value="DNA_mismatch_repair_MutS_core"/>
</dbReference>
<dbReference type="InterPro" id="IPR016151">
    <property type="entry name" value="DNA_mismatch_repair_MutS_N"/>
</dbReference>
<dbReference type="InterPro" id="IPR036187">
    <property type="entry name" value="DNA_mismatch_repair_MutS_sf"/>
</dbReference>
<dbReference type="InterPro" id="IPR007860">
    <property type="entry name" value="DNA_mmatch_repair_MutS_con_dom"/>
</dbReference>
<dbReference type="InterPro" id="IPR045076">
    <property type="entry name" value="MutS"/>
</dbReference>
<dbReference type="InterPro" id="IPR036678">
    <property type="entry name" value="MutS_con_dom_sf"/>
</dbReference>
<dbReference type="InterPro" id="IPR027417">
    <property type="entry name" value="P-loop_NTPase"/>
</dbReference>
<dbReference type="NCBIfam" id="TIGR01070">
    <property type="entry name" value="mutS1"/>
    <property type="match status" value="1"/>
</dbReference>
<dbReference type="NCBIfam" id="NF003810">
    <property type="entry name" value="PRK05399.1"/>
    <property type="match status" value="1"/>
</dbReference>
<dbReference type="PANTHER" id="PTHR11361:SF34">
    <property type="entry name" value="DNA MISMATCH REPAIR PROTEIN MSH1, MITOCHONDRIAL"/>
    <property type="match status" value="1"/>
</dbReference>
<dbReference type="PANTHER" id="PTHR11361">
    <property type="entry name" value="DNA MISMATCH REPAIR PROTEIN MUTS FAMILY MEMBER"/>
    <property type="match status" value="1"/>
</dbReference>
<dbReference type="Pfam" id="PF01624">
    <property type="entry name" value="MutS_I"/>
    <property type="match status" value="1"/>
</dbReference>
<dbReference type="Pfam" id="PF05188">
    <property type="entry name" value="MutS_II"/>
    <property type="match status" value="1"/>
</dbReference>
<dbReference type="Pfam" id="PF05192">
    <property type="entry name" value="MutS_III"/>
    <property type="match status" value="1"/>
</dbReference>
<dbReference type="Pfam" id="PF05190">
    <property type="entry name" value="MutS_IV"/>
    <property type="match status" value="1"/>
</dbReference>
<dbReference type="Pfam" id="PF00488">
    <property type="entry name" value="MutS_V"/>
    <property type="match status" value="1"/>
</dbReference>
<dbReference type="PIRSF" id="PIRSF037677">
    <property type="entry name" value="DNA_mis_repair_Msh6"/>
    <property type="match status" value="1"/>
</dbReference>
<dbReference type="SMART" id="SM00534">
    <property type="entry name" value="MUTSac"/>
    <property type="match status" value="1"/>
</dbReference>
<dbReference type="SMART" id="SM00533">
    <property type="entry name" value="MUTSd"/>
    <property type="match status" value="1"/>
</dbReference>
<dbReference type="SUPFAM" id="SSF55271">
    <property type="entry name" value="DNA repair protein MutS, domain I"/>
    <property type="match status" value="1"/>
</dbReference>
<dbReference type="SUPFAM" id="SSF53150">
    <property type="entry name" value="DNA repair protein MutS, domain II"/>
    <property type="match status" value="1"/>
</dbReference>
<dbReference type="SUPFAM" id="SSF48334">
    <property type="entry name" value="DNA repair protein MutS, domain III"/>
    <property type="match status" value="1"/>
</dbReference>
<dbReference type="SUPFAM" id="SSF52540">
    <property type="entry name" value="P-loop containing nucleoside triphosphate hydrolases"/>
    <property type="match status" value="1"/>
</dbReference>
<dbReference type="PROSITE" id="PS00486">
    <property type="entry name" value="DNA_MISMATCH_REPAIR_2"/>
    <property type="match status" value="1"/>
</dbReference>
<sequence>MAKANVSPGMQQYLDIKKDYPDAFLLFRMGDFYELFYEDAVKAAQILEIGLTSRNKNADNPIPMAGVPYHSVQQYIDVLIDLGHKVAIAEQMEDPKQAVGVVKREVVQVITPGTAVDSSRPDSPNNFLVAVDFDGKAYGLSYMDVSTGEFFATDLADFASVKSEIQNLKAKEVLLGFELSEEEQAILVKQLNLLLSFEMTALEDSPLIDHQLTAVELSAAGKLLHYVHQTQLRELSHLQALVHYDIKDYLQMSYATKSSLDLLENARTGKKHGSLYWLLDETKTAMGMRLLRAWIDRPLVTSEAILERQEIIQVFLNAFIERTDLSDSLKGVYDIERLSSRVSFGKANPKDLLQLGHTLAKVPYIKAILEAFNSPYLDKLVNQIDTLPELEHLIRSAIDPDAPATINEGNIIRTGFDERLDHYRKVMREGTGWIADIETKERQASGISNLKIDYNKKDGYYFHVTNSNLGMVPDHFFRKATLKNSERYGTAELAKIEGQMLEAREESSSLEYDIFMRIRAQVETYIDRLQQLAKALATVDVLQSLAVVAEKNHYVRPLFNQESKIAIDNGRHAVVEKVLGVQEYIPNSISFGPQTSIQLITGPNMSGKSTYMRQLALTVIMAQIGSFVAAESASLPLFDAIFTRIGAADDLISGQSTFMVEMMEANHAIKRATPHSLILFDELGRGTATYDGMALAQSIIEYIHDRVGAKTMFATHYHELTELSTKLTKLVNVHVATLEKDGNVTFLHKIAEGPADKSYGIHVARIAGLPEDLLARADTVLTKLEAQSQARESVLSTTEVRETQQLANQQLSLFTDDGSSSEIIKRLESVDVMNLTPIQAMTVLYELKKLL</sequence>
<keyword id="KW-0067">ATP-binding</keyword>
<keyword id="KW-0227">DNA damage</keyword>
<keyword id="KW-0234">DNA repair</keyword>
<keyword id="KW-0238">DNA-binding</keyword>
<keyword id="KW-0547">Nucleotide-binding</keyword>